<sequence>MTLRLNDLKPADGARTQRTRVGRGIGSGLGKTAGRGHKGSFARKGGGKIKAGFEGGQTPMQRRLPKIGFRSKMARDTAEVLSYQLDKLDAGDVDFVALRAANLVPSRAKKAKIVLKGELSKKFVLKGVAATAGAKAAIEAAGGSVEE</sequence>
<name>RL15_XANOM</name>
<protein>
    <recommendedName>
        <fullName evidence="1">Large ribosomal subunit protein uL15</fullName>
    </recommendedName>
    <alternativeName>
        <fullName evidence="3">50S ribosomal protein L15</fullName>
    </alternativeName>
</protein>
<reference key="1">
    <citation type="journal article" date="2005" name="Jpn. Agric. Res. Q.">
        <title>Genome sequence of Xanthomonas oryzae pv. oryzae suggests contribution of large numbers of effector genes and insertion sequences to its race diversity.</title>
        <authorList>
            <person name="Ochiai H."/>
            <person name="Inoue Y."/>
            <person name="Takeya M."/>
            <person name="Sasaki A."/>
            <person name="Kaku H."/>
        </authorList>
    </citation>
    <scope>NUCLEOTIDE SEQUENCE [LARGE SCALE GENOMIC DNA]</scope>
    <source>
        <strain>MAFF 311018</strain>
    </source>
</reference>
<gene>
    <name evidence="1" type="primary">rplO</name>
    <name type="ordered locus">XOO3368</name>
</gene>
<feature type="chain" id="PRO_0000251590" description="Large ribosomal subunit protein uL15">
    <location>
        <begin position="1"/>
        <end position="147"/>
    </location>
</feature>
<feature type="region of interest" description="Disordered" evidence="2">
    <location>
        <begin position="1"/>
        <end position="61"/>
    </location>
</feature>
<feature type="compositionally biased region" description="Basic and acidic residues" evidence="2">
    <location>
        <begin position="1"/>
        <end position="12"/>
    </location>
</feature>
<feature type="compositionally biased region" description="Gly residues" evidence="2">
    <location>
        <begin position="23"/>
        <end position="33"/>
    </location>
</feature>
<feature type="compositionally biased region" description="Basic residues" evidence="2">
    <location>
        <begin position="34"/>
        <end position="47"/>
    </location>
</feature>
<keyword id="KW-0687">Ribonucleoprotein</keyword>
<keyword id="KW-0689">Ribosomal protein</keyword>
<keyword id="KW-0694">RNA-binding</keyword>
<keyword id="KW-0699">rRNA-binding</keyword>
<evidence type="ECO:0000255" key="1">
    <source>
        <dbReference type="HAMAP-Rule" id="MF_01341"/>
    </source>
</evidence>
<evidence type="ECO:0000256" key="2">
    <source>
        <dbReference type="SAM" id="MobiDB-lite"/>
    </source>
</evidence>
<evidence type="ECO:0000305" key="3"/>
<dbReference type="EMBL" id="AP008229">
    <property type="protein sequence ID" value="BAE70123.1"/>
    <property type="molecule type" value="Genomic_DNA"/>
</dbReference>
<dbReference type="RefSeq" id="WP_011260021.1">
    <property type="nucleotide sequence ID" value="NC_007705.1"/>
</dbReference>
<dbReference type="SMR" id="Q2P004"/>
<dbReference type="KEGG" id="xom:XOO3368"/>
<dbReference type="HOGENOM" id="CLU_055188_4_2_6"/>
<dbReference type="GO" id="GO:0022625">
    <property type="term" value="C:cytosolic large ribosomal subunit"/>
    <property type="evidence" value="ECO:0007669"/>
    <property type="project" value="TreeGrafter"/>
</dbReference>
<dbReference type="GO" id="GO:0019843">
    <property type="term" value="F:rRNA binding"/>
    <property type="evidence" value="ECO:0007669"/>
    <property type="project" value="UniProtKB-UniRule"/>
</dbReference>
<dbReference type="GO" id="GO:0003735">
    <property type="term" value="F:structural constituent of ribosome"/>
    <property type="evidence" value="ECO:0007669"/>
    <property type="project" value="InterPro"/>
</dbReference>
<dbReference type="GO" id="GO:0006412">
    <property type="term" value="P:translation"/>
    <property type="evidence" value="ECO:0007669"/>
    <property type="project" value="UniProtKB-UniRule"/>
</dbReference>
<dbReference type="FunFam" id="3.100.10.10:FF:000008">
    <property type="entry name" value="50S ribosomal protein L15"/>
    <property type="match status" value="1"/>
</dbReference>
<dbReference type="Gene3D" id="3.100.10.10">
    <property type="match status" value="1"/>
</dbReference>
<dbReference type="HAMAP" id="MF_01341">
    <property type="entry name" value="Ribosomal_uL15"/>
    <property type="match status" value="1"/>
</dbReference>
<dbReference type="InterPro" id="IPR030878">
    <property type="entry name" value="Ribosomal_uL15"/>
</dbReference>
<dbReference type="InterPro" id="IPR021131">
    <property type="entry name" value="Ribosomal_uL15/eL18"/>
</dbReference>
<dbReference type="InterPro" id="IPR036227">
    <property type="entry name" value="Ribosomal_uL15/eL18_sf"/>
</dbReference>
<dbReference type="InterPro" id="IPR005749">
    <property type="entry name" value="Ribosomal_uL15_bac-type"/>
</dbReference>
<dbReference type="InterPro" id="IPR001196">
    <property type="entry name" value="Ribosomal_uL15_CS"/>
</dbReference>
<dbReference type="NCBIfam" id="TIGR01071">
    <property type="entry name" value="rplO_bact"/>
    <property type="match status" value="1"/>
</dbReference>
<dbReference type="PANTHER" id="PTHR12934">
    <property type="entry name" value="50S RIBOSOMAL PROTEIN L15"/>
    <property type="match status" value="1"/>
</dbReference>
<dbReference type="PANTHER" id="PTHR12934:SF11">
    <property type="entry name" value="LARGE RIBOSOMAL SUBUNIT PROTEIN UL15M"/>
    <property type="match status" value="1"/>
</dbReference>
<dbReference type="Pfam" id="PF00828">
    <property type="entry name" value="Ribosomal_L27A"/>
    <property type="match status" value="1"/>
</dbReference>
<dbReference type="SUPFAM" id="SSF52080">
    <property type="entry name" value="Ribosomal proteins L15p and L18e"/>
    <property type="match status" value="1"/>
</dbReference>
<dbReference type="PROSITE" id="PS00475">
    <property type="entry name" value="RIBOSOMAL_L15"/>
    <property type="match status" value="1"/>
</dbReference>
<comment type="function">
    <text evidence="1">Binds to the 23S rRNA.</text>
</comment>
<comment type="subunit">
    <text evidence="1">Part of the 50S ribosomal subunit.</text>
</comment>
<comment type="similarity">
    <text evidence="1">Belongs to the universal ribosomal protein uL15 family.</text>
</comment>
<organism>
    <name type="scientific">Xanthomonas oryzae pv. oryzae (strain MAFF 311018)</name>
    <dbReference type="NCBI Taxonomy" id="342109"/>
    <lineage>
        <taxon>Bacteria</taxon>
        <taxon>Pseudomonadati</taxon>
        <taxon>Pseudomonadota</taxon>
        <taxon>Gammaproteobacteria</taxon>
        <taxon>Lysobacterales</taxon>
        <taxon>Lysobacteraceae</taxon>
        <taxon>Xanthomonas</taxon>
    </lineage>
</organism>
<proteinExistence type="inferred from homology"/>
<accession>Q2P004</accession>